<organism>
    <name type="scientific">Schizophyllum commune (strain H4-8 / FGSC 9210)</name>
    <name type="common">Split gill fungus</name>
    <dbReference type="NCBI Taxonomy" id="578458"/>
    <lineage>
        <taxon>Eukaryota</taxon>
        <taxon>Fungi</taxon>
        <taxon>Dikarya</taxon>
        <taxon>Basidiomycota</taxon>
        <taxon>Agaricomycotina</taxon>
        <taxon>Agaricomycetes</taxon>
        <taxon>Agaricomycetidae</taxon>
        <taxon>Agaricales</taxon>
        <taxon>Schizophyllaceae</taxon>
        <taxon>Schizophyllum</taxon>
    </lineage>
</organism>
<proteinExistence type="evidence at transcript level"/>
<evidence type="ECO:0000250" key="1">
    <source>
        <dbReference type="UniProtKB" id="C8VTS4"/>
    </source>
</evidence>
<evidence type="ECO:0000255" key="2">
    <source>
        <dbReference type="PROSITE-ProRule" id="PRU01165"/>
    </source>
</evidence>
<evidence type="ECO:0000256" key="3">
    <source>
        <dbReference type="SAM" id="MobiDB-lite"/>
    </source>
</evidence>
<evidence type="ECO:0000269" key="4">
    <source>
    </source>
</evidence>
<evidence type="ECO:0000303" key="5">
    <source>
    </source>
</evidence>
<evidence type="ECO:0000305" key="6"/>
<keyword id="KW-0963">Cytoplasm</keyword>
<keyword id="KW-0539">Nucleus</keyword>
<keyword id="KW-1185">Reference proteome</keyword>
<keyword id="KW-0749">Sporulation</keyword>
<keyword id="KW-0804">Transcription</keyword>
<keyword id="KW-0805">Transcription regulation</keyword>
<sequence length="536" mass="56704">MIQRTTDPAAGSSTSGPPTNSLSWGSRHNGKLYTLEVVQHPIRARMCGFGDKDRRPLAPAAVATMNVYREDNTQVEVDDIDCSFFLVTVDLWSEDGKQEMNLVLHPNAAQDRGPPMPAKPRRPTNPPPPSNTHGSPPAPAIPFPSYGPPTPYYPPWSAPASDRSPSSASAVLPSISTSFGRAPGPSSATPYGPQYGPPSASSYGPPSASAYGPPSASAYGPPSASAYGPPSASTYGPSSASAYGPPSSASYGPPTSSYASSYPPYHYGPPPPPFGNYGSTSNFDHSQPVTSSVDQETNSPVVTTTARDDDQREGEASTSAAGNPRADPSNSGAPSTSPTASTMGRRESRGRRRRREEREGPDGGPDLREPIEPGSTKAREEEDARTGTEKGDPKDKSDAQRATYTRTLVGPLSSNATRLLDEHRKPGIFFLFQDLSVRTEGTFRLRLRLMNVGAPPAPEPGAAGVHTGVSPVLAQVFTKPFTVFSAKRFPGVPDTTALSIAFNQQNMKLPLRNRHGSGSKRRRRGAGGGSDDEESD</sequence>
<protein>
    <recommendedName>
        <fullName evidence="6">Velvet complex subunit B</fullName>
    </recommendedName>
</protein>
<gene>
    <name evidence="5" type="primary">velB</name>
    <name type="ORF">SCHCODRAFT_255145</name>
</gene>
<dbReference type="EMBL" id="GL377302">
    <property type="protein sequence ID" value="EFJ03233.1"/>
    <property type="molecule type" value="Genomic_DNA"/>
</dbReference>
<dbReference type="RefSeq" id="XP_003038135.1">
    <property type="nucleotide sequence ID" value="XM_003038089.1"/>
</dbReference>
<dbReference type="STRING" id="578458.D8PJU0"/>
<dbReference type="GeneID" id="9588259"/>
<dbReference type="KEGG" id="scm:SCHCO_02623379"/>
<dbReference type="VEuPathDB" id="FungiDB:SCHCODRAFT_02623379"/>
<dbReference type="eggNOG" id="ENOG502S1B4">
    <property type="taxonomic scope" value="Eukaryota"/>
</dbReference>
<dbReference type="HOGENOM" id="CLU_022491_4_0_1"/>
<dbReference type="InParanoid" id="D8PJU0"/>
<dbReference type="OMA" id="CRTHGKF"/>
<dbReference type="OrthoDB" id="1746739at2759"/>
<dbReference type="Proteomes" id="UP000007431">
    <property type="component" value="Unassembled WGS sequence"/>
</dbReference>
<dbReference type="GO" id="GO:0005737">
    <property type="term" value="C:cytoplasm"/>
    <property type="evidence" value="ECO:0007669"/>
    <property type="project" value="UniProtKB-SubCell"/>
</dbReference>
<dbReference type="GO" id="GO:0005634">
    <property type="term" value="C:nucleus"/>
    <property type="evidence" value="ECO:0007669"/>
    <property type="project" value="UniProtKB-SubCell"/>
</dbReference>
<dbReference type="GO" id="GO:0030435">
    <property type="term" value="P:sporulation resulting in formation of a cellular spore"/>
    <property type="evidence" value="ECO:0007669"/>
    <property type="project" value="UniProtKB-KW"/>
</dbReference>
<dbReference type="Gene3D" id="2.60.40.3960">
    <property type="entry name" value="Velvet domain"/>
    <property type="match status" value="2"/>
</dbReference>
<dbReference type="InterPro" id="IPR021740">
    <property type="entry name" value="Velvet"/>
</dbReference>
<dbReference type="InterPro" id="IPR037525">
    <property type="entry name" value="Velvet_dom"/>
</dbReference>
<dbReference type="InterPro" id="IPR038491">
    <property type="entry name" value="Velvet_dom_sf"/>
</dbReference>
<dbReference type="PANTHER" id="PTHR33572">
    <property type="entry name" value="SPORE DEVELOPMENT REGULATOR VOSA"/>
    <property type="match status" value="1"/>
</dbReference>
<dbReference type="PANTHER" id="PTHR33572:SF3">
    <property type="entry name" value="VELVET COMPLEX SUBUNIT B"/>
    <property type="match status" value="1"/>
</dbReference>
<dbReference type="Pfam" id="PF11754">
    <property type="entry name" value="Velvet"/>
    <property type="match status" value="1"/>
</dbReference>
<dbReference type="PROSITE" id="PS51821">
    <property type="entry name" value="VELVET"/>
    <property type="match status" value="1"/>
</dbReference>
<name>VELB_SCHCM</name>
<reference key="1">
    <citation type="journal article" date="2010" name="Nat. Biotechnol.">
        <title>Genome sequence of the model mushroom Schizophyllum commune.</title>
        <authorList>
            <person name="Ohm R.A."/>
            <person name="de Jong J.F."/>
            <person name="Lugones L.G."/>
            <person name="Aerts A."/>
            <person name="Kothe E."/>
            <person name="Stajich J.E."/>
            <person name="de Vries R.P."/>
            <person name="Record E."/>
            <person name="Levasseur A."/>
            <person name="Baker S.E."/>
            <person name="Bartholomew K.A."/>
            <person name="Coutinho P.M."/>
            <person name="Erdmann S."/>
            <person name="Fowler T.J."/>
            <person name="Gathman A.C."/>
            <person name="Lombard V."/>
            <person name="Henrissat B."/>
            <person name="Knabe N."/>
            <person name="Kuees U."/>
            <person name="Lilly W.W."/>
            <person name="Lindquist E."/>
            <person name="Lucas S."/>
            <person name="Magnuson J.K."/>
            <person name="Piumi F."/>
            <person name="Raudaskoski M."/>
            <person name="Salamov A."/>
            <person name="Schmutz J."/>
            <person name="Schwarze F.W.M.R."/>
            <person name="vanKuyk P.A."/>
            <person name="Horton J.S."/>
            <person name="Grigoriev I.V."/>
            <person name="Woesten H.A.B."/>
        </authorList>
    </citation>
    <scope>NUCLEOTIDE SEQUENCE [LARGE SCALE GENOMIC DNA]</scope>
    <source>
        <strain>H4-8 / FGSC 9210</strain>
    </source>
</reference>
<reference key="2">
    <citation type="journal article" date="2014" name="BMC Genomics">
        <title>Comparative transcriptomics of the model mushroom Coprinopsis cinerea reveals tissue-specific armories and a conserved circuitry for sexual development.</title>
        <authorList>
            <person name="Plaza D.F."/>
            <person name="Lin C.W."/>
            <person name="van der Velden N.S."/>
            <person name="Aebi M."/>
            <person name="Kuenzler M."/>
        </authorList>
    </citation>
    <scope>INDUCTION</scope>
</reference>
<feature type="chain" id="PRO_0000435913" description="Velvet complex subunit B">
    <location>
        <begin position="1"/>
        <end position="536"/>
    </location>
</feature>
<feature type="domain" description="Velvet" evidence="2">
    <location>
        <begin position="25"/>
        <end position="512"/>
    </location>
</feature>
<feature type="region of interest" description="Disordered" evidence="3">
    <location>
        <begin position="1"/>
        <end position="27"/>
    </location>
</feature>
<feature type="region of interest" description="Disordered" evidence="3">
    <location>
        <begin position="106"/>
        <end position="143"/>
    </location>
</feature>
<feature type="region of interest" description="Disordered" evidence="3">
    <location>
        <begin position="157"/>
        <end position="409"/>
    </location>
</feature>
<feature type="region of interest" description="Disordered" evidence="3">
    <location>
        <begin position="508"/>
        <end position="536"/>
    </location>
</feature>
<feature type="compositionally biased region" description="Polar residues" evidence="3">
    <location>
        <begin position="1"/>
        <end position="26"/>
    </location>
</feature>
<feature type="compositionally biased region" description="Pro residues" evidence="3">
    <location>
        <begin position="114"/>
        <end position="143"/>
    </location>
</feature>
<feature type="compositionally biased region" description="Low complexity" evidence="3">
    <location>
        <begin position="158"/>
        <end position="170"/>
    </location>
</feature>
<feature type="compositionally biased region" description="Low complexity" evidence="3">
    <location>
        <begin position="190"/>
        <end position="265"/>
    </location>
</feature>
<feature type="compositionally biased region" description="Polar residues" evidence="3">
    <location>
        <begin position="280"/>
        <end position="305"/>
    </location>
</feature>
<feature type="compositionally biased region" description="Basic and acidic residues" evidence="3">
    <location>
        <begin position="306"/>
        <end position="315"/>
    </location>
</feature>
<feature type="compositionally biased region" description="Low complexity" evidence="3">
    <location>
        <begin position="328"/>
        <end position="342"/>
    </location>
</feature>
<feature type="compositionally biased region" description="Basic and acidic residues" evidence="3">
    <location>
        <begin position="356"/>
        <end position="399"/>
    </location>
</feature>
<feature type="compositionally biased region" description="Polar residues" evidence="3">
    <location>
        <begin position="400"/>
        <end position="409"/>
    </location>
</feature>
<feature type="compositionally biased region" description="Basic residues" evidence="3">
    <location>
        <begin position="511"/>
        <end position="525"/>
    </location>
</feature>
<accession>D8PJU0</accession>
<comment type="function">
    <text evidence="1">Component of the velvet transcription factor complex that controls sexual/asexual developmental ratio in response to light, promoting sexual development in the darkness while stimulating asexual sporulation under illumination (By similarity). The velvet complex acts as a global regulator for secondary metabolite gene expression (By similarity). Component of the velB-VosA heterodimeric complex that plays a dual role in activating genes associated with spore maturation and repressing certain development-associated genes (By similarity). The velB-VosA complex binds DNA through the DNA-binding domain of vosA that recognizes an 11-nucleotide consensus sequence 5'-CTGGCCGCGGC-3' consisting of two motifs in the promoters of key developmental regulatory genes (By similarity).</text>
</comment>
<comment type="subunit">
    <text evidence="1">Component of the heterotrimeric velvet complex composed of laeA, veA and velB; VeA acting as a bridging protein between laeA and velB (By similarity). Forms a heterodimeric complex with vosA; the formation of the velB-vosA complex is light-dependent (By similarity).</text>
</comment>
<comment type="subcellular location">
    <subcellularLocation>
        <location evidence="1">Nucleus</location>
    </subcellularLocation>
    <subcellularLocation>
        <location evidence="1">Cytoplasm</location>
    </subcellularLocation>
    <text evidence="1">Nuclear localization is mediated by veA (By similarity).</text>
</comment>
<comment type="induction">
    <text evidence="4">Expression is down-regulated during fruiting body formation (PubMed:24942908).</text>
</comment>
<comment type="similarity">
    <text evidence="6">Belongs to the velvet family. VelB subfamily.</text>
</comment>